<evidence type="ECO:0000255" key="1">
    <source>
        <dbReference type="HAMAP-Rule" id="MF_00800"/>
    </source>
</evidence>
<dbReference type="EMBL" id="BA000018">
    <property type="protein sequence ID" value="BAB43200.1"/>
    <property type="molecule type" value="Genomic_DNA"/>
</dbReference>
<dbReference type="PIR" id="G90004">
    <property type="entry name" value="G90004"/>
</dbReference>
<dbReference type="RefSeq" id="WP_000654184.1">
    <property type="nucleotide sequence ID" value="NC_002745.2"/>
</dbReference>
<dbReference type="SMR" id="Q7A4E2"/>
<dbReference type="EnsemblBacteria" id="BAB43200">
    <property type="protein sequence ID" value="BAB43200"/>
    <property type="gene ID" value="BAB43200"/>
</dbReference>
<dbReference type="KEGG" id="sau:SA1916"/>
<dbReference type="HOGENOM" id="CLU_106658_0_0_9"/>
<dbReference type="Gene3D" id="3.40.50.10360">
    <property type="entry name" value="Hypothetical protein TT1679"/>
    <property type="match status" value="1"/>
</dbReference>
<dbReference type="HAMAP" id="MF_00800">
    <property type="entry name" value="UPF0340"/>
    <property type="match status" value="1"/>
</dbReference>
<dbReference type="InterPro" id="IPR028345">
    <property type="entry name" value="Antibiotic_NAT-like"/>
</dbReference>
<dbReference type="InterPro" id="IPR006340">
    <property type="entry name" value="DUF436"/>
</dbReference>
<dbReference type="NCBIfam" id="TIGR01440">
    <property type="entry name" value="TIGR01440 family protein"/>
    <property type="match status" value="1"/>
</dbReference>
<dbReference type="Pfam" id="PF04260">
    <property type="entry name" value="DUF436"/>
    <property type="match status" value="1"/>
</dbReference>
<dbReference type="PIRSF" id="PIRSF007510">
    <property type="entry name" value="UCP007510"/>
    <property type="match status" value="1"/>
</dbReference>
<dbReference type="SUPFAM" id="SSF110710">
    <property type="entry name" value="TTHA0583/YokD-like"/>
    <property type="match status" value="1"/>
</dbReference>
<organism>
    <name type="scientific">Staphylococcus aureus (strain N315)</name>
    <dbReference type="NCBI Taxonomy" id="158879"/>
    <lineage>
        <taxon>Bacteria</taxon>
        <taxon>Bacillati</taxon>
        <taxon>Bacillota</taxon>
        <taxon>Bacilli</taxon>
        <taxon>Bacillales</taxon>
        <taxon>Staphylococcaceae</taxon>
        <taxon>Staphylococcus</taxon>
    </lineage>
</organism>
<gene>
    <name type="ordered locus">SA1916</name>
</gene>
<name>Y1916_STAAN</name>
<proteinExistence type="inferred from homology"/>
<comment type="similarity">
    <text evidence="1">Belongs to the UPF0340 family.</text>
</comment>
<sequence length="174" mass="18895">MKDLTMLLDELKDMSFFNKGDICLIGCSTSEVIGEKIGTVGSMEVAETIFNALDVVSKETGVTFAFQGCEHINRAITIEKSQYNPLTMEEVSVVPDVHAGGSLATYAFQHMKDPIVVEHITVPCGIDIGQTLIGMHIKHVCVPVRTSVKQVGQAIVTIATSRPKKIGGERAKYK</sequence>
<protein>
    <recommendedName>
        <fullName evidence="1">UPF0340 protein SA1916</fullName>
    </recommendedName>
</protein>
<reference key="1">
    <citation type="journal article" date="2001" name="Lancet">
        <title>Whole genome sequencing of meticillin-resistant Staphylococcus aureus.</title>
        <authorList>
            <person name="Kuroda M."/>
            <person name="Ohta T."/>
            <person name="Uchiyama I."/>
            <person name="Baba T."/>
            <person name="Yuzawa H."/>
            <person name="Kobayashi I."/>
            <person name="Cui L."/>
            <person name="Oguchi A."/>
            <person name="Aoki K."/>
            <person name="Nagai Y."/>
            <person name="Lian J.-Q."/>
            <person name="Ito T."/>
            <person name="Kanamori M."/>
            <person name="Matsumaru H."/>
            <person name="Maruyama A."/>
            <person name="Murakami H."/>
            <person name="Hosoyama A."/>
            <person name="Mizutani-Ui Y."/>
            <person name="Takahashi N.K."/>
            <person name="Sawano T."/>
            <person name="Inoue R."/>
            <person name="Kaito C."/>
            <person name="Sekimizu K."/>
            <person name="Hirakawa H."/>
            <person name="Kuhara S."/>
            <person name="Goto S."/>
            <person name="Yabuzaki J."/>
            <person name="Kanehisa M."/>
            <person name="Yamashita A."/>
            <person name="Oshima K."/>
            <person name="Furuya K."/>
            <person name="Yoshino C."/>
            <person name="Shiba T."/>
            <person name="Hattori M."/>
            <person name="Ogasawara N."/>
            <person name="Hayashi H."/>
            <person name="Hiramatsu K."/>
        </authorList>
    </citation>
    <scope>NUCLEOTIDE SEQUENCE [LARGE SCALE GENOMIC DNA]</scope>
    <source>
        <strain>N315</strain>
    </source>
</reference>
<feature type="chain" id="PRO_0000213012" description="UPF0340 protein SA1916">
    <location>
        <begin position="1"/>
        <end position="174"/>
    </location>
</feature>
<accession>Q7A4E2</accession>